<gene>
    <name type="primary">cprA</name>
    <name type="synonym">CP1</name>
    <name type="ORF">DDB_G0290957</name>
</gene>
<keyword id="KW-1015">Disulfide bond</keyword>
<keyword id="KW-0325">Glycoprotein</keyword>
<keyword id="KW-0378">Hydrolase</keyword>
<keyword id="KW-0458">Lysosome</keyword>
<keyword id="KW-0597">Phosphoprotein</keyword>
<keyword id="KW-0645">Protease</keyword>
<keyword id="KW-1185">Reference proteome</keyword>
<keyword id="KW-0732">Signal</keyword>
<keyword id="KW-0788">Thiol protease</keyword>
<keyword id="KW-0865">Zymogen</keyword>
<comment type="function">
    <text>Cysteine proteinases 1 and 2 are believed to participate in the breakdown of protein during differentiation of Dictyostelium as a response to starvation.</text>
</comment>
<comment type="subcellular location">
    <subcellularLocation>
        <location>Lysosome</location>
    </subcellularLocation>
</comment>
<comment type="PTM">
    <text>Phosphoglycosylated, contains GlcNAc-alpha-1-P-Ser residues.</text>
</comment>
<comment type="similarity">
    <text evidence="3 4 5">Belongs to the peptidase C1 family.</text>
</comment>
<accession>P04988</accession>
<accession>Q54FC0</accession>
<proteinExistence type="evidence at transcript level"/>
<name>CYSP1_DICDI</name>
<sequence>MKVILLFVLAVFTVFVSSRGIPLEEQSQFLEFQDKFNKKYSHEEYLERFEIFKSNLGKIEELNLIAINHKADTKFGVNKFADLSSDEFKNYYLNNKEAIFTDDLPVADYLDDEFINSIPTAFDWRTRGAVTPVKNQGQCGSCWSFSTTGNVEGQHFISQNKLVSLSEQNLVDCDHECMEYEGEQACDEGCNGGLQPNAYNYIIKNGGIQTESSYPYTAETGTQCNFNSANIGAKISNFTMIPKNETVMAGYIVSTGPLAIAADAVEWQFYIGGVFDIPCNPNSLDHGILIVGYSAKNTIFRKNMPYWIVKNSWGADWGEQGYIYLRRGKNTCGVSNFVSTSII</sequence>
<feature type="signal peptide" evidence="2">
    <location>
        <begin position="1"/>
        <end position="18"/>
    </location>
</feature>
<feature type="propeptide" id="PRO_0000026358" description="Activation peptide">
    <location>
        <begin position="19"/>
        <end position="117"/>
    </location>
</feature>
<feature type="chain" id="PRO_0000026359" description="Cysteine proteinase 1">
    <location>
        <begin position="118"/>
        <end position="343"/>
    </location>
</feature>
<feature type="active site" evidence="1">
    <location>
        <position position="142"/>
    </location>
</feature>
<feature type="active site" evidence="1">
    <location>
        <position position="286"/>
    </location>
</feature>
<feature type="active site" evidence="1">
    <location>
        <position position="311"/>
    </location>
</feature>
<feature type="disulfide bond" evidence="1">
    <location>
        <begin position="139"/>
        <end position="190"/>
    </location>
</feature>
<feature type="disulfide bond" evidence="1">
    <location>
        <begin position="173"/>
        <end position="224"/>
    </location>
</feature>
<feature type="disulfide bond" evidence="1">
    <location>
        <begin position="279"/>
        <end position="332"/>
    </location>
</feature>
<feature type="sequence conflict" description="In Ref. 1; CAA26255." evidence="6" ref="1">
    <original>L</original>
    <variation>P</variation>
    <location>
        <position position="23"/>
    </location>
</feature>
<feature type="sequence conflict" description="In Ref. 1; CAA26255." evidence="6" ref="1">
    <original>Q</original>
    <variation>E</variation>
    <location>
        <position position="184"/>
    </location>
</feature>
<dbReference type="EC" id="3.4.22.-"/>
<dbReference type="EMBL" id="X02407">
    <property type="protein sequence ID" value="CAA26255.1"/>
    <property type="molecule type" value="mRNA"/>
</dbReference>
<dbReference type="EMBL" id="AAFI02000174">
    <property type="protein sequence ID" value="EAL61909.1"/>
    <property type="molecule type" value="Genomic_DNA"/>
</dbReference>
<dbReference type="PIR" id="A22827">
    <property type="entry name" value="KHDO"/>
</dbReference>
<dbReference type="RefSeq" id="XP_635417.1">
    <property type="nucleotide sequence ID" value="XM_630325.1"/>
</dbReference>
<dbReference type="SMR" id="P04988"/>
<dbReference type="FunCoup" id="P04988">
    <property type="interactions" value="18"/>
</dbReference>
<dbReference type="STRING" id="44689.P04988"/>
<dbReference type="MEROPS" id="C01.022"/>
<dbReference type="GlyConnect" id="118">
    <property type="glycosylation" value="1 O-Linked glycan"/>
</dbReference>
<dbReference type="GlyCosmos" id="P04988">
    <property type="glycosylation" value="No site information, 1 glycan"/>
</dbReference>
<dbReference type="GlyGen" id="P04988">
    <property type="glycosylation" value="1 site"/>
</dbReference>
<dbReference type="PaxDb" id="44689-DDB0201647"/>
<dbReference type="EnsemblProtists" id="EAL61909">
    <property type="protein sequence ID" value="EAL61909"/>
    <property type="gene ID" value="DDB_G0290957"/>
</dbReference>
<dbReference type="GeneID" id="8627918"/>
<dbReference type="KEGG" id="ddi:DDB_G0290957"/>
<dbReference type="dictyBase" id="DDB_G0290957">
    <property type="gene designation" value="cprA"/>
</dbReference>
<dbReference type="VEuPathDB" id="AmoebaDB:DDB_G0290957"/>
<dbReference type="eggNOG" id="KOG1542">
    <property type="taxonomic scope" value="Eukaryota"/>
</dbReference>
<dbReference type="HOGENOM" id="CLU_012184_1_3_1"/>
<dbReference type="InParanoid" id="P04988"/>
<dbReference type="OMA" id="IAINAEW"/>
<dbReference type="PhylomeDB" id="P04988"/>
<dbReference type="Reactome" id="R-DDI-114608">
    <property type="pathway name" value="Platelet degranulation"/>
</dbReference>
<dbReference type="Reactome" id="R-DDI-2132295">
    <property type="pathway name" value="MHC class II antigen presentation"/>
</dbReference>
<dbReference type="PRO" id="PR:P04988"/>
<dbReference type="Proteomes" id="UP000002195">
    <property type="component" value="Chromosome 5"/>
</dbReference>
<dbReference type="GO" id="GO:0005615">
    <property type="term" value="C:extracellular space"/>
    <property type="evidence" value="ECO:0000318"/>
    <property type="project" value="GO_Central"/>
</dbReference>
<dbReference type="GO" id="GO:0005764">
    <property type="term" value="C:lysosome"/>
    <property type="evidence" value="ECO:0000318"/>
    <property type="project" value="GO_Central"/>
</dbReference>
<dbReference type="GO" id="GO:0004197">
    <property type="term" value="F:cysteine-type endopeptidase activity"/>
    <property type="evidence" value="ECO:0000318"/>
    <property type="project" value="GO_Central"/>
</dbReference>
<dbReference type="GO" id="GO:0006972">
    <property type="term" value="P:hyperosmotic response"/>
    <property type="evidence" value="ECO:0000270"/>
    <property type="project" value="dictyBase"/>
</dbReference>
<dbReference type="GO" id="GO:0051603">
    <property type="term" value="P:proteolysis involved in protein catabolic process"/>
    <property type="evidence" value="ECO:0000318"/>
    <property type="project" value="GO_Central"/>
</dbReference>
<dbReference type="CDD" id="cd02248">
    <property type="entry name" value="Peptidase_C1A"/>
    <property type="match status" value="1"/>
</dbReference>
<dbReference type="FunFam" id="3.90.70.10:FF:000130">
    <property type="entry name" value="Cysteine proteinase 1"/>
    <property type="match status" value="1"/>
</dbReference>
<dbReference type="Gene3D" id="3.90.70.10">
    <property type="entry name" value="Cysteine proteinases"/>
    <property type="match status" value="1"/>
</dbReference>
<dbReference type="InterPro" id="IPR038765">
    <property type="entry name" value="Papain-like_cys_pep_sf"/>
</dbReference>
<dbReference type="InterPro" id="IPR025661">
    <property type="entry name" value="Pept_asp_AS"/>
</dbReference>
<dbReference type="InterPro" id="IPR000169">
    <property type="entry name" value="Pept_cys_AS"/>
</dbReference>
<dbReference type="InterPro" id="IPR025660">
    <property type="entry name" value="Pept_his_AS"/>
</dbReference>
<dbReference type="InterPro" id="IPR013128">
    <property type="entry name" value="Peptidase_C1A"/>
</dbReference>
<dbReference type="InterPro" id="IPR000668">
    <property type="entry name" value="Peptidase_C1A_C"/>
</dbReference>
<dbReference type="InterPro" id="IPR039417">
    <property type="entry name" value="Peptidase_C1A_papain-like"/>
</dbReference>
<dbReference type="InterPro" id="IPR013201">
    <property type="entry name" value="Prot_inhib_I29"/>
</dbReference>
<dbReference type="PANTHER" id="PTHR12411">
    <property type="entry name" value="CYSTEINE PROTEASE FAMILY C1-RELATED"/>
    <property type="match status" value="1"/>
</dbReference>
<dbReference type="Pfam" id="PF08246">
    <property type="entry name" value="Inhibitor_I29"/>
    <property type="match status" value="1"/>
</dbReference>
<dbReference type="Pfam" id="PF00112">
    <property type="entry name" value="Peptidase_C1"/>
    <property type="match status" value="1"/>
</dbReference>
<dbReference type="PRINTS" id="PR00705">
    <property type="entry name" value="PAPAIN"/>
</dbReference>
<dbReference type="SMART" id="SM00848">
    <property type="entry name" value="Inhibitor_I29"/>
    <property type="match status" value="1"/>
</dbReference>
<dbReference type="SMART" id="SM00645">
    <property type="entry name" value="Pept_C1"/>
    <property type="match status" value="1"/>
</dbReference>
<dbReference type="SUPFAM" id="SSF54001">
    <property type="entry name" value="Cysteine proteinases"/>
    <property type="match status" value="1"/>
</dbReference>
<dbReference type="PROSITE" id="PS00640">
    <property type="entry name" value="THIOL_PROTEASE_ASN"/>
    <property type="match status" value="1"/>
</dbReference>
<dbReference type="PROSITE" id="PS00139">
    <property type="entry name" value="THIOL_PROTEASE_CYS"/>
    <property type="match status" value="1"/>
</dbReference>
<dbReference type="PROSITE" id="PS00639">
    <property type="entry name" value="THIOL_PROTEASE_HIS"/>
    <property type="match status" value="1"/>
</dbReference>
<evidence type="ECO:0000250" key="1"/>
<evidence type="ECO:0000255" key="2"/>
<evidence type="ECO:0000255" key="3">
    <source>
        <dbReference type="PROSITE-ProRule" id="PRU10088"/>
    </source>
</evidence>
<evidence type="ECO:0000255" key="4">
    <source>
        <dbReference type="PROSITE-ProRule" id="PRU10089"/>
    </source>
</evidence>
<evidence type="ECO:0000255" key="5">
    <source>
        <dbReference type="PROSITE-ProRule" id="PRU10090"/>
    </source>
</evidence>
<evidence type="ECO:0000305" key="6"/>
<protein>
    <recommendedName>
        <fullName>Cysteine proteinase 1</fullName>
        <ecNumber>3.4.22.-</ecNumber>
    </recommendedName>
</protein>
<reference key="1">
    <citation type="journal article" date="1985" name="EMBO J.">
        <title>A developmentally regulated cysteine proteinase in Dictyostelium discoideum.</title>
        <authorList>
            <person name="Williams J.G."/>
            <person name="North M.J."/>
            <person name="Mahbubani H.M."/>
        </authorList>
    </citation>
    <scope>NUCLEOTIDE SEQUENCE [MRNA]</scope>
</reference>
<reference key="2">
    <citation type="journal article" date="2005" name="Nature">
        <title>The genome of the social amoeba Dictyostelium discoideum.</title>
        <authorList>
            <person name="Eichinger L."/>
            <person name="Pachebat J.A."/>
            <person name="Gloeckner G."/>
            <person name="Rajandream M.A."/>
            <person name="Sucgang R."/>
            <person name="Berriman M."/>
            <person name="Song J."/>
            <person name="Olsen R."/>
            <person name="Szafranski K."/>
            <person name="Xu Q."/>
            <person name="Tunggal B."/>
            <person name="Kummerfeld S."/>
            <person name="Madera M."/>
            <person name="Konfortov B.A."/>
            <person name="Rivero F."/>
            <person name="Bankier A.T."/>
            <person name="Lehmann R."/>
            <person name="Hamlin N."/>
            <person name="Davies R."/>
            <person name="Gaudet P."/>
            <person name="Fey P."/>
            <person name="Pilcher K."/>
            <person name="Chen G."/>
            <person name="Saunders D."/>
            <person name="Sodergren E.J."/>
            <person name="Davis P."/>
            <person name="Kerhornou A."/>
            <person name="Nie X."/>
            <person name="Hall N."/>
            <person name="Anjard C."/>
            <person name="Hemphill L."/>
            <person name="Bason N."/>
            <person name="Farbrother P."/>
            <person name="Desany B."/>
            <person name="Just E."/>
            <person name="Morio T."/>
            <person name="Rost R."/>
            <person name="Churcher C.M."/>
            <person name="Cooper J."/>
            <person name="Haydock S."/>
            <person name="van Driessche N."/>
            <person name="Cronin A."/>
            <person name="Goodhead I."/>
            <person name="Muzny D.M."/>
            <person name="Mourier T."/>
            <person name="Pain A."/>
            <person name="Lu M."/>
            <person name="Harper D."/>
            <person name="Lindsay R."/>
            <person name="Hauser H."/>
            <person name="James K.D."/>
            <person name="Quiles M."/>
            <person name="Madan Babu M."/>
            <person name="Saito T."/>
            <person name="Buchrieser C."/>
            <person name="Wardroper A."/>
            <person name="Felder M."/>
            <person name="Thangavelu M."/>
            <person name="Johnson D."/>
            <person name="Knights A."/>
            <person name="Loulseged H."/>
            <person name="Mungall K.L."/>
            <person name="Oliver K."/>
            <person name="Price C."/>
            <person name="Quail M.A."/>
            <person name="Urushihara H."/>
            <person name="Hernandez J."/>
            <person name="Rabbinowitsch E."/>
            <person name="Steffen D."/>
            <person name="Sanders M."/>
            <person name="Ma J."/>
            <person name="Kohara Y."/>
            <person name="Sharp S."/>
            <person name="Simmonds M.N."/>
            <person name="Spiegler S."/>
            <person name="Tivey A."/>
            <person name="Sugano S."/>
            <person name="White B."/>
            <person name="Walker D."/>
            <person name="Woodward J.R."/>
            <person name="Winckler T."/>
            <person name="Tanaka Y."/>
            <person name="Shaulsky G."/>
            <person name="Schleicher M."/>
            <person name="Weinstock G.M."/>
            <person name="Rosenthal A."/>
            <person name="Cox E.C."/>
            <person name="Chisholm R.L."/>
            <person name="Gibbs R.A."/>
            <person name="Loomis W.F."/>
            <person name="Platzer M."/>
            <person name="Kay R.R."/>
            <person name="Williams J.G."/>
            <person name="Dear P.H."/>
            <person name="Noegel A.A."/>
            <person name="Barrell B.G."/>
            <person name="Kuspa A."/>
        </authorList>
    </citation>
    <scope>NUCLEOTIDE SEQUENCE [LARGE SCALE GENOMIC DNA]</scope>
    <source>
        <strain>AX4</strain>
    </source>
</reference>
<reference key="3">
    <citation type="journal article" date="1996" name="J. Biol. Chem.">
        <title>A lysosomal cysteine proteinase from Dictyostelium discoideum contains N-acetylglucosamine-1-phosphate bound to serine but not mannose-6-phosphate on N-linked oligosaccharides.</title>
        <authorList>
            <person name="Mehta D.P."/>
            <person name="Ichikawa M."/>
            <person name="Salimath P.V."/>
            <person name="Etchison J.R."/>
            <person name="Haak R."/>
            <person name="Manzi A."/>
            <person name="Freeze H.H."/>
        </authorList>
    </citation>
    <scope>STRUCTURE OF CARBOHYDRATES</scope>
</reference>
<organism>
    <name type="scientific">Dictyostelium discoideum</name>
    <name type="common">Social amoeba</name>
    <dbReference type="NCBI Taxonomy" id="44689"/>
    <lineage>
        <taxon>Eukaryota</taxon>
        <taxon>Amoebozoa</taxon>
        <taxon>Evosea</taxon>
        <taxon>Eumycetozoa</taxon>
        <taxon>Dictyostelia</taxon>
        <taxon>Dictyosteliales</taxon>
        <taxon>Dictyosteliaceae</taxon>
        <taxon>Dictyostelium</taxon>
    </lineage>
</organism>